<gene>
    <name evidence="1" type="primary">murG</name>
    <name type="ordered locus">CHU_2739</name>
</gene>
<comment type="function">
    <text evidence="1">Cell wall formation. Catalyzes the transfer of a GlcNAc subunit on undecaprenyl-pyrophosphoryl-MurNAc-pentapeptide (lipid intermediate I) to form undecaprenyl-pyrophosphoryl-MurNAc-(pentapeptide)GlcNAc (lipid intermediate II).</text>
</comment>
<comment type="catalytic activity">
    <reaction evidence="1">
        <text>di-trans,octa-cis-undecaprenyl diphospho-N-acetyl-alpha-D-muramoyl-L-alanyl-D-glutamyl-meso-2,6-diaminopimeloyl-D-alanyl-D-alanine + UDP-N-acetyl-alpha-D-glucosamine = di-trans,octa-cis-undecaprenyl diphospho-[N-acetyl-alpha-D-glucosaminyl-(1-&gt;4)]-N-acetyl-alpha-D-muramoyl-L-alanyl-D-glutamyl-meso-2,6-diaminopimeloyl-D-alanyl-D-alanine + UDP + H(+)</text>
        <dbReference type="Rhea" id="RHEA:31227"/>
        <dbReference type="ChEBI" id="CHEBI:15378"/>
        <dbReference type="ChEBI" id="CHEBI:57705"/>
        <dbReference type="ChEBI" id="CHEBI:58223"/>
        <dbReference type="ChEBI" id="CHEBI:61387"/>
        <dbReference type="ChEBI" id="CHEBI:61388"/>
        <dbReference type="EC" id="2.4.1.227"/>
    </reaction>
</comment>
<comment type="pathway">
    <text evidence="1">Cell wall biogenesis; peptidoglycan biosynthesis.</text>
</comment>
<comment type="subcellular location">
    <subcellularLocation>
        <location evidence="1">Cell inner membrane</location>
        <topology evidence="1">Peripheral membrane protein</topology>
        <orientation evidence="1">Cytoplasmic side</orientation>
    </subcellularLocation>
</comment>
<comment type="similarity">
    <text evidence="1">Belongs to the glycosyltransferase 28 family. MurG subfamily.</text>
</comment>
<dbReference type="EC" id="2.4.1.227" evidence="1"/>
<dbReference type="EMBL" id="CP000383">
    <property type="protein sequence ID" value="ABG59989.1"/>
    <property type="molecule type" value="Genomic_DNA"/>
</dbReference>
<dbReference type="RefSeq" id="WP_011586099.1">
    <property type="nucleotide sequence ID" value="NC_008255.1"/>
</dbReference>
<dbReference type="SMR" id="Q11RH5"/>
<dbReference type="STRING" id="269798.CHU_2739"/>
<dbReference type="CAZy" id="GT28">
    <property type="family name" value="Glycosyltransferase Family 28"/>
</dbReference>
<dbReference type="KEGG" id="chu:CHU_2739"/>
<dbReference type="eggNOG" id="COG0707">
    <property type="taxonomic scope" value="Bacteria"/>
</dbReference>
<dbReference type="HOGENOM" id="CLU_037404_0_1_10"/>
<dbReference type="OrthoDB" id="9808936at2"/>
<dbReference type="UniPathway" id="UPA00219"/>
<dbReference type="Proteomes" id="UP000001822">
    <property type="component" value="Chromosome"/>
</dbReference>
<dbReference type="GO" id="GO:0005886">
    <property type="term" value="C:plasma membrane"/>
    <property type="evidence" value="ECO:0007669"/>
    <property type="project" value="UniProtKB-SubCell"/>
</dbReference>
<dbReference type="GO" id="GO:0051991">
    <property type="term" value="F:UDP-N-acetyl-D-glucosamine:N-acetylmuramoyl-L-alanyl-D-glutamyl-meso-2,6-diaminopimelyl-D-alanyl-D-alanine-diphosphoundecaprenol 4-beta-N-acetylglucosaminlytransferase activity"/>
    <property type="evidence" value="ECO:0007669"/>
    <property type="project" value="RHEA"/>
</dbReference>
<dbReference type="GO" id="GO:0050511">
    <property type="term" value="F:undecaprenyldiphospho-muramoylpentapeptide beta-N-acetylglucosaminyltransferase activity"/>
    <property type="evidence" value="ECO:0007669"/>
    <property type="project" value="UniProtKB-UniRule"/>
</dbReference>
<dbReference type="GO" id="GO:0005975">
    <property type="term" value="P:carbohydrate metabolic process"/>
    <property type="evidence" value="ECO:0007669"/>
    <property type="project" value="InterPro"/>
</dbReference>
<dbReference type="GO" id="GO:0051301">
    <property type="term" value="P:cell division"/>
    <property type="evidence" value="ECO:0007669"/>
    <property type="project" value="UniProtKB-KW"/>
</dbReference>
<dbReference type="GO" id="GO:0071555">
    <property type="term" value="P:cell wall organization"/>
    <property type="evidence" value="ECO:0007669"/>
    <property type="project" value="UniProtKB-KW"/>
</dbReference>
<dbReference type="GO" id="GO:0030259">
    <property type="term" value="P:lipid glycosylation"/>
    <property type="evidence" value="ECO:0007669"/>
    <property type="project" value="UniProtKB-UniRule"/>
</dbReference>
<dbReference type="GO" id="GO:0009252">
    <property type="term" value="P:peptidoglycan biosynthetic process"/>
    <property type="evidence" value="ECO:0007669"/>
    <property type="project" value="UniProtKB-UniRule"/>
</dbReference>
<dbReference type="GO" id="GO:0008360">
    <property type="term" value="P:regulation of cell shape"/>
    <property type="evidence" value="ECO:0007669"/>
    <property type="project" value="UniProtKB-KW"/>
</dbReference>
<dbReference type="CDD" id="cd03785">
    <property type="entry name" value="GT28_MurG"/>
    <property type="match status" value="1"/>
</dbReference>
<dbReference type="Gene3D" id="3.40.50.2000">
    <property type="entry name" value="Glycogen Phosphorylase B"/>
    <property type="match status" value="2"/>
</dbReference>
<dbReference type="HAMAP" id="MF_00033">
    <property type="entry name" value="MurG"/>
    <property type="match status" value="1"/>
</dbReference>
<dbReference type="InterPro" id="IPR006009">
    <property type="entry name" value="GlcNAc_MurG"/>
</dbReference>
<dbReference type="InterPro" id="IPR007235">
    <property type="entry name" value="Glyco_trans_28_C"/>
</dbReference>
<dbReference type="InterPro" id="IPR004276">
    <property type="entry name" value="GlycoTrans_28_N"/>
</dbReference>
<dbReference type="NCBIfam" id="TIGR01133">
    <property type="entry name" value="murG"/>
    <property type="match status" value="1"/>
</dbReference>
<dbReference type="PANTHER" id="PTHR21015:SF22">
    <property type="entry name" value="GLYCOSYLTRANSFERASE"/>
    <property type="match status" value="1"/>
</dbReference>
<dbReference type="PANTHER" id="PTHR21015">
    <property type="entry name" value="UDP-N-ACETYLGLUCOSAMINE--N-ACETYLMURAMYL-(PENTAPEPTIDE) PYROPHOSPHORYL-UNDECAPRENOL N-ACETYLGLUCOSAMINE TRANSFERASE 1"/>
    <property type="match status" value="1"/>
</dbReference>
<dbReference type="Pfam" id="PF04101">
    <property type="entry name" value="Glyco_tran_28_C"/>
    <property type="match status" value="1"/>
</dbReference>
<dbReference type="Pfam" id="PF03033">
    <property type="entry name" value="Glyco_transf_28"/>
    <property type="match status" value="1"/>
</dbReference>
<dbReference type="SUPFAM" id="SSF53756">
    <property type="entry name" value="UDP-Glycosyltransferase/glycogen phosphorylase"/>
    <property type="match status" value="1"/>
</dbReference>
<accession>Q11RH5</accession>
<evidence type="ECO:0000255" key="1">
    <source>
        <dbReference type="HAMAP-Rule" id="MF_00033"/>
    </source>
</evidence>
<protein>
    <recommendedName>
        <fullName evidence="1">UDP-N-acetylglucosamine--N-acetylmuramyl-(pentapeptide) pyrophosphoryl-undecaprenol N-acetylglucosamine transferase</fullName>
        <ecNumber evidence="1">2.4.1.227</ecNumber>
    </recommendedName>
    <alternativeName>
        <fullName evidence="1">Undecaprenyl-PP-MurNAc-pentapeptide-UDPGlcNAc GlcNAc transferase</fullName>
    </alternativeName>
</protein>
<name>MURG_CYTH3</name>
<sequence length="369" mass="40508">MPEQKPYRIIISGGGTGGHIYPAVAIANAIKARFPDSEILFVGAQGRMEMQKVPAAGYNIEGLWISGIQRKLSLDNLAFPLKVIASYFKAKKIVSTFKPDIAIGVGGYASWPLLQAANASGVATLIQEQNSYAGVANKALSKKVKAICVAYERMERFFPGDKIVYTGNPVRKDIVDYKKYSEGAHTFFGLKPGVPTLFVMGGSLGARTINLSIERNLEQLKNAGIQVLWQTGKFYYEGLKQYNSETIKVTDFIADMNRAYAMADVIVSRAGALSISELSIVGKPCILVPSPNVAEDHQTKNALALSEKQAAWMVKDMNAPEELVQKALELMKNQDAQHTLSKNILTFARPDATERIVNKVFEIINTDRK</sequence>
<reference key="1">
    <citation type="journal article" date="2007" name="Appl. Environ. Microbiol.">
        <title>Genome sequence of the cellulolytic gliding bacterium Cytophaga hutchinsonii.</title>
        <authorList>
            <person name="Xie G."/>
            <person name="Bruce D.C."/>
            <person name="Challacombe J.F."/>
            <person name="Chertkov O."/>
            <person name="Detter J.C."/>
            <person name="Gilna P."/>
            <person name="Han C.S."/>
            <person name="Lucas S."/>
            <person name="Misra M."/>
            <person name="Myers G.L."/>
            <person name="Richardson P."/>
            <person name="Tapia R."/>
            <person name="Thayer N."/>
            <person name="Thompson L.S."/>
            <person name="Brettin T.S."/>
            <person name="Henrissat B."/>
            <person name="Wilson D.B."/>
            <person name="McBride M.J."/>
        </authorList>
    </citation>
    <scope>NUCLEOTIDE SEQUENCE [LARGE SCALE GENOMIC DNA]</scope>
    <source>
        <strain>ATCC 33406 / DSM 1761 / JCM 20678 / CIP 103989 / IAM 12607 / NBRC 15051 / NCIMB 9469 / D465</strain>
    </source>
</reference>
<keyword id="KW-0131">Cell cycle</keyword>
<keyword id="KW-0132">Cell division</keyword>
<keyword id="KW-0997">Cell inner membrane</keyword>
<keyword id="KW-1003">Cell membrane</keyword>
<keyword id="KW-0133">Cell shape</keyword>
<keyword id="KW-0961">Cell wall biogenesis/degradation</keyword>
<keyword id="KW-0328">Glycosyltransferase</keyword>
<keyword id="KW-0472">Membrane</keyword>
<keyword id="KW-0573">Peptidoglycan synthesis</keyword>
<keyword id="KW-1185">Reference proteome</keyword>
<keyword id="KW-0808">Transferase</keyword>
<organism>
    <name type="scientific">Cytophaga hutchinsonii (strain ATCC 33406 / DSM 1761 / CIP 103989 / NBRC 15051 / NCIMB 9469 / D465)</name>
    <dbReference type="NCBI Taxonomy" id="269798"/>
    <lineage>
        <taxon>Bacteria</taxon>
        <taxon>Pseudomonadati</taxon>
        <taxon>Bacteroidota</taxon>
        <taxon>Cytophagia</taxon>
        <taxon>Cytophagales</taxon>
        <taxon>Cytophagaceae</taxon>
        <taxon>Cytophaga</taxon>
    </lineage>
</organism>
<feature type="chain" id="PRO_0000315088" description="UDP-N-acetylglucosamine--N-acetylmuramyl-(pentapeptide) pyrophosphoryl-undecaprenol N-acetylglucosamine transferase">
    <location>
        <begin position="1"/>
        <end position="369"/>
    </location>
</feature>
<feature type="binding site" evidence="1">
    <location>
        <begin position="16"/>
        <end position="18"/>
    </location>
    <ligand>
        <name>UDP-N-acetyl-alpha-D-glucosamine</name>
        <dbReference type="ChEBI" id="CHEBI:57705"/>
    </ligand>
</feature>
<feature type="binding site" evidence="1">
    <location>
        <position position="130"/>
    </location>
    <ligand>
        <name>UDP-N-acetyl-alpha-D-glucosamine</name>
        <dbReference type="ChEBI" id="CHEBI:57705"/>
    </ligand>
</feature>
<feature type="binding site" evidence="1">
    <location>
        <position position="171"/>
    </location>
    <ligand>
        <name>UDP-N-acetyl-alpha-D-glucosamine</name>
        <dbReference type="ChEBI" id="CHEBI:57705"/>
    </ligand>
</feature>
<feature type="binding site" evidence="1">
    <location>
        <position position="203"/>
    </location>
    <ligand>
        <name>UDP-N-acetyl-alpha-D-glucosamine</name>
        <dbReference type="ChEBI" id="CHEBI:57705"/>
    </ligand>
</feature>
<feature type="binding site" evidence="1">
    <location>
        <position position="253"/>
    </location>
    <ligand>
        <name>UDP-N-acetyl-alpha-D-glucosamine</name>
        <dbReference type="ChEBI" id="CHEBI:57705"/>
    </ligand>
</feature>
<feature type="binding site" evidence="1">
    <location>
        <position position="298"/>
    </location>
    <ligand>
        <name>UDP-N-acetyl-alpha-D-glucosamine</name>
        <dbReference type="ChEBI" id="CHEBI:57705"/>
    </ligand>
</feature>
<proteinExistence type="inferred from homology"/>